<proteinExistence type="predicted"/>
<dbReference type="EMBL" id="U17244">
    <property type="status" value="NOT_ANNOTATED_CDS"/>
    <property type="molecule type" value="Genomic_DNA"/>
</dbReference>
<dbReference type="EMBL" id="BK006945">
    <property type="protein sequence ID" value="DAA09578.1"/>
    <property type="molecule type" value="Genomic_DNA"/>
</dbReference>
<dbReference type="RefSeq" id="NP_878129.1">
    <property type="nucleotide sequence ID" value="NM_001184638.1"/>
</dbReference>
<dbReference type="SMR" id="Q3E732"/>
<dbReference type="BioGRID" id="36959">
    <property type="interactions" value="55"/>
</dbReference>
<dbReference type="FunCoup" id="Q3E732">
    <property type="interactions" value="17"/>
</dbReference>
<dbReference type="STRING" id="4932.YLR264C-A"/>
<dbReference type="PaxDb" id="4932-YLR264C-A"/>
<dbReference type="EnsemblFungi" id="YLR264C-A_mRNA">
    <property type="protein sequence ID" value="YLR264C-A"/>
    <property type="gene ID" value="YLR264C-A"/>
</dbReference>
<dbReference type="GeneID" id="1466417"/>
<dbReference type="KEGG" id="sce:YLR264C-A"/>
<dbReference type="AGR" id="SGD:S000028808"/>
<dbReference type="SGD" id="S000028808">
    <property type="gene designation" value="YLR264C-A"/>
</dbReference>
<dbReference type="VEuPathDB" id="FungiDB:YLR264C-A"/>
<dbReference type="HOGENOM" id="CLU_3335851_0_0_1"/>
<dbReference type="InParanoid" id="Q3E732"/>
<dbReference type="OrthoDB" id="10427052at2759"/>
<dbReference type="BioCyc" id="YEAST:G3O-32589-MONOMER"/>
<dbReference type="PRO" id="PR:Q3E732"/>
<dbReference type="Proteomes" id="UP000002311">
    <property type="component" value="Chromosome XII"/>
</dbReference>
<name>YL264_YEAST</name>
<gene>
    <name type="ordered locus">YLR264C-A</name>
</gene>
<protein>
    <recommendedName>
        <fullName>Putative uncharacterized protein YLR264C-A</fullName>
    </recommendedName>
</protein>
<reference key="1">
    <citation type="journal article" date="1997" name="Nature">
        <title>The nucleotide sequence of Saccharomyces cerevisiae chromosome XII.</title>
        <authorList>
            <person name="Johnston M."/>
            <person name="Hillier L.W."/>
            <person name="Riles L."/>
            <person name="Albermann K."/>
            <person name="Andre B."/>
            <person name="Ansorge W."/>
            <person name="Benes V."/>
            <person name="Brueckner M."/>
            <person name="Delius H."/>
            <person name="Dubois E."/>
            <person name="Duesterhoeft A."/>
            <person name="Entian K.-D."/>
            <person name="Floeth M."/>
            <person name="Goffeau A."/>
            <person name="Hebling U."/>
            <person name="Heumann K."/>
            <person name="Heuss-Neitzel D."/>
            <person name="Hilbert H."/>
            <person name="Hilger F."/>
            <person name="Kleine K."/>
            <person name="Koetter P."/>
            <person name="Louis E.J."/>
            <person name="Messenguy F."/>
            <person name="Mewes H.-W."/>
            <person name="Miosga T."/>
            <person name="Moestl D."/>
            <person name="Mueller-Auer S."/>
            <person name="Nentwich U."/>
            <person name="Obermaier B."/>
            <person name="Piravandi E."/>
            <person name="Pohl T.M."/>
            <person name="Portetelle D."/>
            <person name="Purnelle B."/>
            <person name="Rechmann S."/>
            <person name="Rieger M."/>
            <person name="Rinke M."/>
            <person name="Rose M."/>
            <person name="Scharfe M."/>
            <person name="Scherens B."/>
            <person name="Scholler P."/>
            <person name="Schwager C."/>
            <person name="Schwarz S."/>
            <person name="Underwood A.P."/>
            <person name="Urrestarazu L.A."/>
            <person name="Vandenbol M."/>
            <person name="Verhasselt P."/>
            <person name="Vierendeels F."/>
            <person name="Voet M."/>
            <person name="Volckaert G."/>
            <person name="Voss H."/>
            <person name="Wambutt R."/>
            <person name="Wedler E."/>
            <person name="Wedler H."/>
            <person name="Zimmermann F.K."/>
            <person name="Zollner A."/>
            <person name="Hani J."/>
            <person name="Hoheisel J.D."/>
        </authorList>
    </citation>
    <scope>NUCLEOTIDE SEQUENCE [LARGE SCALE GENOMIC DNA]</scope>
    <source>
        <strain>ATCC 204508 / S288c</strain>
    </source>
</reference>
<reference key="2">
    <citation type="journal article" date="2014" name="G3 (Bethesda)">
        <title>The reference genome sequence of Saccharomyces cerevisiae: Then and now.</title>
        <authorList>
            <person name="Engel S.R."/>
            <person name="Dietrich F.S."/>
            <person name="Fisk D.G."/>
            <person name="Binkley G."/>
            <person name="Balakrishnan R."/>
            <person name="Costanzo M.C."/>
            <person name="Dwight S.S."/>
            <person name="Hitz B.C."/>
            <person name="Karra K."/>
            <person name="Nash R.S."/>
            <person name="Weng S."/>
            <person name="Wong E.D."/>
            <person name="Lloyd P."/>
            <person name="Skrzypek M.S."/>
            <person name="Miyasato S.R."/>
            <person name="Simison M."/>
            <person name="Cherry J.M."/>
        </authorList>
    </citation>
    <scope>GENOME REANNOTATION</scope>
    <source>
        <strain>ATCC 204508 / S288c</strain>
    </source>
</reference>
<accession>Q3E732</accession>
<accession>D6VYR2</accession>
<sequence>MNVIFKLYLTIDAPKKKKVTVRDFLSIRYSMPYRLASN</sequence>
<organism>
    <name type="scientific">Saccharomyces cerevisiae (strain ATCC 204508 / S288c)</name>
    <name type="common">Baker's yeast</name>
    <dbReference type="NCBI Taxonomy" id="559292"/>
    <lineage>
        <taxon>Eukaryota</taxon>
        <taxon>Fungi</taxon>
        <taxon>Dikarya</taxon>
        <taxon>Ascomycota</taxon>
        <taxon>Saccharomycotina</taxon>
        <taxon>Saccharomycetes</taxon>
        <taxon>Saccharomycetales</taxon>
        <taxon>Saccharomycetaceae</taxon>
        <taxon>Saccharomyces</taxon>
    </lineage>
</organism>
<feature type="chain" id="PRO_0000247136" description="Putative uncharacterized protein YLR264C-A">
    <location>
        <begin position="1"/>
        <end position="38"/>
    </location>
</feature>
<keyword id="KW-1185">Reference proteome</keyword>